<gene>
    <name type="ORF">PMAA_077770</name>
</gene>
<protein>
    <recommendedName>
        <fullName evidence="1">Methionine aminopeptidase 2-2</fullName>
        <shortName evidence="1">MAP 2-2</shortName>
        <shortName evidence="1">MetAP 2-2</shortName>
        <ecNumber evidence="1">3.4.11.18</ecNumber>
    </recommendedName>
    <alternativeName>
        <fullName evidence="1">Peptidase M</fullName>
    </alternativeName>
</protein>
<feature type="chain" id="PRO_0000407633" description="Methionine aminopeptidase 2-2">
    <location>
        <begin position="1"/>
        <end position="463"/>
    </location>
</feature>
<feature type="region of interest" description="Disordered" evidence="2">
    <location>
        <begin position="1"/>
        <end position="107"/>
    </location>
</feature>
<feature type="compositionally biased region" description="Acidic residues" evidence="2">
    <location>
        <begin position="37"/>
        <end position="53"/>
    </location>
</feature>
<feature type="compositionally biased region" description="Basic residues" evidence="2">
    <location>
        <begin position="69"/>
        <end position="83"/>
    </location>
</feature>
<feature type="binding site" evidence="1">
    <location>
        <position position="215"/>
    </location>
    <ligand>
        <name>substrate</name>
    </ligand>
</feature>
<feature type="binding site" evidence="1">
    <location>
        <position position="236"/>
    </location>
    <ligand>
        <name>a divalent metal cation</name>
        <dbReference type="ChEBI" id="CHEBI:60240"/>
        <label>1</label>
    </ligand>
</feature>
<feature type="binding site" evidence="1">
    <location>
        <position position="247"/>
    </location>
    <ligand>
        <name>a divalent metal cation</name>
        <dbReference type="ChEBI" id="CHEBI:60240"/>
        <label>1</label>
    </ligand>
</feature>
<feature type="binding site" evidence="1">
    <location>
        <position position="247"/>
    </location>
    <ligand>
        <name>a divalent metal cation</name>
        <dbReference type="ChEBI" id="CHEBI:60240"/>
        <label>2</label>
        <note>catalytic</note>
    </ligand>
</feature>
<feature type="binding site" evidence="1">
    <location>
        <position position="316"/>
    </location>
    <ligand>
        <name>a divalent metal cation</name>
        <dbReference type="ChEBI" id="CHEBI:60240"/>
        <label>2</label>
        <note>catalytic</note>
    </ligand>
</feature>
<feature type="binding site" evidence="1">
    <location>
        <position position="324"/>
    </location>
    <ligand>
        <name>substrate</name>
    </ligand>
</feature>
<feature type="binding site" evidence="1">
    <location>
        <position position="349"/>
    </location>
    <ligand>
        <name>a divalent metal cation</name>
        <dbReference type="ChEBI" id="CHEBI:60240"/>
        <label>2</label>
        <note>catalytic</note>
    </ligand>
</feature>
<feature type="binding site" evidence="1">
    <location>
        <position position="444"/>
    </location>
    <ligand>
        <name>a divalent metal cation</name>
        <dbReference type="ChEBI" id="CHEBI:60240"/>
        <label>1</label>
    </ligand>
</feature>
<feature type="binding site" evidence="1">
    <location>
        <position position="444"/>
    </location>
    <ligand>
        <name>a divalent metal cation</name>
        <dbReference type="ChEBI" id="CHEBI:60240"/>
        <label>2</label>
        <note>catalytic</note>
    </ligand>
</feature>
<accession>B6QD96</accession>
<proteinExistence type="inferred from homology"/>
<keyword id="KW-0031">Aminopeptidase</keyword>
<keyword id="KW-0963">Cytoplasm</keyword>
<keyword id="KW-0378">Hydrolase</keyword>
<keyword id="KW-0479">Metal-binding</keyword>
<keyword id="KW-0645">Protease</keyword>
<keyword id="KW-1185">Reference proteome</keyword>
<evidence type="ECO:0000255" key="1">
    <source>
        <dbReference type="HAMAP-Rule" id="MF_03175"/>
    </source>
</evidence>
<evidence type="ECO:0000256" key="2">
    <source>
        <dbReference type="SAM" id="MobiDB-lite"/>
    </source>
</evidence>
<dbReference type="EC" id="3.4.11.18" evidence="1"/>
<dbReference type="EMBL" id="DS995901">
    <property type="protein sequence ID" value="EEA23746.1"/>
    <property type="molecule type" value="Genomic_DNA"/>
</dbReference>
<dbReference type="RefSeq" id="XP_002147257.1">
    <property type="nucleotide sequence ID" value="XM_002147221.1"/>
</dbReference>
<dbReference type="SMR" id="B6QD96"/>
<dbReference type="STRING" id="441960.B6QD96"/>
<dbReference type="VEuPathDB" id="FungiDB:PMAA_077770"/>
<dbReference type="HOGENOM" id="CLU_015857_7_1_1"/>
<dbReference type="OrthoDB" id="5050at28568"/>
<dbReference type="PhylomeDB" id="B6QD96"/>
<dbReference type="Proteomes" id="UP000001294">
    <property type="component" value="Unassembled WGS sequence"/>
</dbReference>
<dbReference type="GO" id="GO:0005737">
    <property type="term" value="C:cytoplasm"/>
    <property type="evidence" value="ECO:0007669"/>
    <property type="project" value="UniProtKB-SubCell"/>
</dbReference>
<dbReference type="GO" id="GO:0004239">
    <property type="term" value="F:initiator methionyl aminopeptidase activity"/>
    <property type="evidence" value="ECO:0007669"/>
    <property type="project" value="UniProtKB-UniRule"/>
</dbReference>
<dbReference type="GO" id="GO:0046872">
    <property type="term" value="F:metal ion binding"/>
    <property type="evidence" value="ECO:0007669"/>
    <property type="project" value="UniProtKB-UniRule"/>
</dbReference>
<dbReference type="GO" id="GO:0070006">
    <property type="term" value="F:metalloaminopeptidase activity"/>
    <property type="evidence" value="ECO:0007669"/>
    <property type="project" value="UniProtKB-UniRule"/>
</dbReference>
<dbReference type="GO" id="GO:0006508">
    <property type="term" value="P:proteolysis"/>
    <property type="evidence" value="ECO:0007669"/>
    <property type="project" value="UniProtKB-KW"/>
</dbReference>
<dbReference type="CDD" id="cd01088">
    <property type="entry name" value="MetAP2"/>
    <property type="match status" value="1"/>
</dbReference>
<dbReference type="Gene3D" id="3.90.230.10">
    <property type="entry name" value="Creatinase/methionine aminopeptidase superfamily"/>
    <property type="match status" value="1"/>
</dbReference>
<dbReference type="Gene3D" id="1.10.10.10">
    <property type="entry name" value="Winged helix-like DNA-binding domain superfamily/Winged helix DNA-binding domain"/>
    <property type="match status" value="1"/>
</dbReference>
<dbReference type="HAMAP" id="MF_03175">
    <property type="entry name" value="MetAP_2_euk"/>
    <property type="match status" value="1"/>
</dbReference>
<dbReference type="InterPro" id="IPR036005">
    <property type="entry name" value="Creatinase/aminopeptidase-like"/>
</dbReference>
<dbReference type="InterPro" id="IPR050247">
    <property type="entry name" value="Met_Aminopeptidase_Type2"/>
</dbReference>
<dbReference type="InterPro" id="IPR000994">
    <property type="entry name" value="Pept_M24"/>
</dbReference>
<dbReference type="InterPro" id="IPR001714">
    <property type="entry name" value="Pept_M24_MAP"/>
</dbReference>
<dbReference type="InterPro" id="IPR002468">
    <property type="entry name" value="Pept_M24A_MAP2"/>
</dbReference>
<dbReference type="InterPro" id="IPR018349">
    <property type="entry name" value="Pept_M24A_MAP2_BS"/>
</dbReference>
<dbReference type="InterPro" id="IPR036388">
    <property type="entry name" value="WH-like_DNA-bd_sf"/>
</dbReference>
<dbReference type="InterPro" id="IPR036390">
    <property type="entry name" value="WH_DNA-bd_sf"/>
</dbReference>
<dbReference type="NCBIfam" id="TIGR00501">
    <property type="entry name" value="met_pdase_II"/>
    <property type="match status" value="1"/>
</dbReference>
<dbReference type="PANTHER" id="PTHR45777">
    <property type="entry name" value="METHIONINE AMINOPEPTIDASE 2"/>
    <property type="match status" value="1"/>
</dbReference>
<dbReference type="PANTHER" id="PTHR45777:SF1">
    <property type="entry name" value="METHIONINE AMINOPEPTIDASE 2-2"/>
    <property type="match status" value="1"/>
</dbReference>
<dbReference type="Pfam" id="PF00557">
    <property type="entry name" value="Peptidase_M24"/>
    <property type="match status" value="1"/>
</dbReference>
<dbReference type="PRINTS" id="PR00599">
    <property type="entry name" value="MAPEPTIDASE"/>
</dbReference>
<dbReference type="SUPFAM" id="SSF55920">
    <property type="entry name" value="Creatinase/aminopeptidase"/>
    <property type="match status" value="1"/>
</dbReference>
<dbReference type="SUPFAM" id="SSF46785">
    <property type="entry name" value="Winged helix' DNA-binding domain"/>
    <property type="match status" value="1"/>
</dbReference>
<dbReference type="PROSITE" id="PS01202">
    <property type="entry name" value="MAP_2"/>
    <property type="match status" value="1"/>
</dbReference>
<reference key="1">
    <citation type="journal article" date="2015" name="Genome Announc.">
        <title>Genome sequence of the AIDS-associated pathogen Penicillium marneffei (ATCC18224) and its near taxonomic relative Talaromyces stipitatus (ATCC10500).</title>
        <authorList>
            <person name="Nierman W.C."/>
            <person name="Fedorova-Abrams N.D."/>
            <person name="Andrianopoulos A."/>
        </authorList>
    </citation>
    <scope>NUCLEOTIDE SEQUENCE [LARGE SCALE GENOMIC DNA]</scope>
    <source>
        <strain>ATCC 18224 / CBS 334.59 / QM 7333</strain>
    </source>
</reference>
<comment type="function">
    <text evidence="1">Cotranslationally removes the N-terminal methionine from nascent proteins. The N-terminal methionine is often cleaved when the second residue in the primary sequence is small and uncharged (Met-Ala-, Cys, Gly, Pro, Ser, Thr, or Val).</text>
</comment>
<comment type="catalytic activity">
    <reaction evidence="1">
        <text>Release of N-terminal amino acids, preferentially methionine, from peptides and arylamides.</text>
        <dbReference type="EC" id="3.4.11.18"/>
    </reaction>
</comment>
<comment type="cofactor">
    <cofactor evidence="1">
        <name>Co(2+)</name>
        <dbReference type="ChEBI" id="CHEBI:48828"/>
    </cofactor>
    <cofactor evidence="1">
        <name>Zn(2+)</name>
        <dbReference type="ChEBI" id="CHEBI:29105"/>
    </cofactor>
    <cofactor evidence="1">
        <name>Mn(2+)</name>
        <dbReference type="ChEBI" id="CHEBI:29035"/>
    </cofactor>
    <cofactor evidence="1">
        <name>Fe(2+)</name>
        <dbReference type="ChEBI" id="CHEBI:29033"/>
    </cofactor>
    <text evidence="1">Binds 2 divalent metal cations per subunit. Has a high-affinity and a low affinity metal-binding site. The true nature of the physiological cofactor is under debate. The enzyme is active with cobalt, zinc, manganese or divalent iron ions. Most likely, methionine aminopeptidases function as mononuclear Fe(2+)-metalloproteases under physiological conditions, and the catalytically relevant metal-binding site has been assigned to the histidine-containing high-affinity site.</text>
</comment>
<comment type="subcellular location">
    <subcellularLocation>
        <location evidence="1">Cytoplasm</location>
    </subcellularLocation>
</comment>
<comment type="similarity">
    <text evidence="1">Belongs to the peptidase M24A family. Methionine aminopeptidase eukaryotic type 2 subfamily.</text>
</comment>
<organism>
    <name type="scientific">Talaromyces marneffei (strain ATCC 18224 / CBS 334.59 / QM 7333)</name>
    <name type="common">Penicillium marneffei</name>
    <dbReference type="NCBI Taxonomy" id="441960"/>
    <lineage>
        <taxon>Eukaryota</taxon>
        <taxon>Fungi</taxon>
        <taxon>Dikarya</taxon>
        <taxon>Ascomycota</taxon>
        <taxon>Pezizomycotina</taxon>
        <taxon>Eurotiomycetes</taxon>
        <taxon>Eurotiomycetidae</taxon>
        <taxon>Eurotiales</taxon>
        <taxon>Trichocomaceae</taxon>
        <taxon>Talaromyces</taxon>
        <taxon>Talaromyces sect. Talaromyces</taxon>
    </lineage>
</organism>
<name>MAP22_TALMQ</name>
<sequence length="463" mass="50462">MGAKTFEGGDNHEDATNALSTKSNAVGGKPRGANMLEDGDGEFGTDDDDDGDGQDSSLAVVNPEDGSKPKKRKRSKKKKSNKKKPGDGAQQQTSPPRVPLSQLFPDGKYPVGQMVKVPAVNLRRTTDEELRYLSRGTITNDEALSDYRKAAEVHRQVRHWVHETVHPGQSLTELAVGIEDGVRALLGHQGLEPGDSLKGGMGFPTGLALNNCAAHYTPNPGQKDIILKKEDVMKVDFGVHVNGWIVDSAFTVTFDPVYDNLLAAVKDATNTGLKCAGVDARVGEIGGYIQEAMESYEVEINGKVHPVKAIRNITGHDILPYRIHGGKQVPFIKSKDQTKMEEGEVFAIETFGTTGKGYMMDGPGVYGYSKDPDARNMHLPLASARALLKTINQNFGTIPFCRRYLDRLGLEKYLLGMNSLISHGIVHMYPPLVDIPGSYTAQFEHTILIKSSGNEIISRGDDY</sequence>